<evidence type="ECO:0000255" key="1">
    <source>
        <dbReference type="HAMAP-Rule" id="MF_00004"/>
    </source>
</evidence>
<reference key="1">
    <citation type="journal article" date="2009" name="PLoS Genet.">
        <title>Organised genome dynamics in the Escherichia coli species results in highly diverse adaptive paths.</title>
        <authorList>
            <person name="Touchon M."/>
            <person name="Hoede C."/>
            <person name="Tenaillon O."/>
            <person name="Barbe V."/>
            <person name="Baeriswyl S."/>
            <person name="Bidet P."/>
            <person name="Bingen E."/>
            <person name="Bonacorsi S."/>
            <person name="Bouchier C."/>
            <person name="Bouvet O."/>
            <person name="Calteau A."/>
            <person name="Chiapello H."/>
            <person name="Clermont O."/>
            <person name="Cruveiller S."/>
            <person name="Danchin A."/>
            <person name="Diard M."/>
            <person name="Dossat C."/>
            <person name="Karoui M.E."/>
            <person name="Frapy E."/>
            <person name="Garry L."/>
            <person name="Ghigo J.M."/>
            <person name="Gilles A.M."/>
            <person name="Johnson J."/>
            <person name="Le Bouguenec C."/>
            <person name="Lescat M."/>
            <person name="Mangenot S."/>
            <person name="Martinez-Jehanne V."/>
            <person name="Matic I."/>
            <person name="Nassif X."/>
            <person name="Oztas S."/>
            <person name="Petit M.A."/>
            <person name="Pichon C."/>
            <person name="Rouy Z."/>
            <person name="Ruf C.S."/>
            <person name="Schneider D."/>
            <person name="Tourret J."/>
            <person name="Vacherie B."/>
            <person name="Vallenet D."/>
            <person name="Medigue C."/>
            <person name="Rocha E.P.C."/>
            <person name="Denamur E."/>
        </authorList>
    </citation>
    <scope>NUCLEOTIDE SEQUENCE [LARGE SCALE GENOMIC DNA]</scope>
    <source>
        <strain>UMN026 / ExPEC</strain>
    </source>
</reference>
<keyword id="KW-0963">Cytoplasm</keyword>
<keyword id="KW-0328">Glycosyltransferase</keyword>
<keyword id="KW-0660">Purine salvage</keyword>
<keyword id="KW-0808">Transferase</keyword>
<sequence>MTATAQQLEYLKNSIKSIQDYPKPGILFRDVTSLLEDPKAYALSIDLLVERYKNAGITKVVGTEARGFLFGAPVALGLGVGFVPVRKPGKLPRETISETYDLEYGTDQLEIHVDAIKPGDKVLVVDDLLATGGTIEATVKLIRRLGGEVADAAFIINLFDLGGEQRLEKQGITSYSLVPFPGH</sequence>
<feature type="chain" id="PRO_1000116174" description="Adenine phosphoribosyltransferase">
    <location>
        <begin position="1"/>
        <end position="183"/>
    </location>
</feature>
<organism>
    <name type="scientific">Escherichia coli O17:K52:H18 (strain UMN026 / ExPEC)</name>
    <dbReference type="NCBI Taxonomy" id="585056"/>
    <lineage>
        <taxon>Bacteria</taxon>
        <taxon>Pseudomonadati</taxon>
        <taxon>Pseudomonadota</taxon>
        <taxon>Gammaproteobacteria</taxon>
        <taxon>Enterobacterales</taxon>
        <taxon>Enterobacteriaceae</taxon>
        <taxon>Escherichia</taxon>
    </lineage>
</organism>
<comment type="function">
    <text evidence="1">Catalyzes a salvage reaction resulting in the formation of AMP, that is energically less costly than de novo synthesis.</text>
</comment>
<comment type="catalytic activity">
    <reaction evidence="1">
        <text>AMP + diphosphate = 5-phospho-alpha-D-ribose 1-diphosphate + adenine</text>
        <dbReference type="Rhea" id="RHEA:16609"/>
        <dbReference type="ChEBI" id="CHEBI:16708"/>
        <dbReference type="ChEBI" id="CHEBI:33019"/>
        <dbReference type="ChEBI" id="CHEBI:58017"/>
        <dbReference type="ChEBI" id="CHEBI:456215"/>
        <dbReference type="EC" id="2.4.2.7"/>
    </reaction>
</comment>
<comment type="pathway">
    <text evidence="1">Purine metabolism; AMP biosynthesis via salvage pathway; AMP from adenine: step 1/1.</text>
</comment>
<comment type="subunit">
    <text evidence="1">Homodimer.</text>
</comment>
<comment type="subcellular location">
    <subcellularLocation>
        <location evidence="1">Cytoplasm</location>
    </subcellularLocation>
</comment>
<comment type="similarity">
    <text evidence="1">Belongs to the purine/pyrimidine phosphoribosyltransferase family.</text>
</comment>
<dbReference type="EC" id="2.4.2.7" evidence="1"/>
<dbReference type="EMBL" id="CU928163">
    <property type="protein sequence ID" value="CAR11723.1"/>
    <property type="molecule type" value="Genomic_DNA"/>
</dbReference>
<dbReference type="RefSeq" id="WP_000127356.1">
    <property type="nucleotide sequence ID" value="NC_011751.1"/>
</dbReference>
<dbReference type="RefSeq" id="YP_002411271.1">
    <property type="nucleotide sequence ID" value="NC_011751.1"/>
</dbReference>
<dbReference type="SMR" id="B7N922"/>
<dbReference type="STRING" id="585056.ECUMN_0508"/>
<dbReference type="GeneID" id="93776981"/>
<dbReference type="KEGG" id="eum:ECUMN_0508"/>
<dbReference type="PATRIC" id="fig|585056.7.peg.715"/>
<dbReference type="HOGENOM" id="CLU_063339_3_0_6"/>
<dbReference type="UniPathway" id="UPA00588">
    <property type="reaction ID" value="UER00646"/>
</dbReference>
<dbReference type="Proteomes" id="UP000007097">
    <property type="component" value="Chromosome"/>
</dbReference>
<dbReference type="GO" id="GO:0005737">
    <property type="term" value="C:cytoplasm"/>
    <property type="evidence" value="ECO:0007669"/>
    <property type="project" value="UniProtKB-SubCell"/>
</dbReference>
<dbReference type="GO" id="GO:0002055">
    <property type="term" value="F:adenine binding"/>
    <property type="evidence" value="ECO:0007669"/>
    <property type="project" value="TreeGrafter"/>
</dbReference>
<dbReference type="GO" id="GO:0003999">
    <property type="term" value="F:adenine phosphoribosyltransferase activity"/>
    <property type="evidence" value="ECO:0007669"/>
    <property type="project" value="UniProtKB-UniRule"/>
</dbReference>
<dbReference type="GO" id="GO:0016208">
    <property type="term" value="F:AMP binding"/>
    <property type="evidence" value="ECO:0007669"/>
    <property type="project" value="TreeGrafter"/>
</dbReference>
<dbReference type="GO" id="GO:0006168">
    <property type="term" value="P:adenine salvage"/>
    <property type="evidence" value="ECO:0007669"/>
    <property type="project" value="InterPro"/>
</dbReference>
<dbReference type="GO" id="GO:0044209">
    <property type="term" value="P:AMP salvage"/>
    <property type="evidence" value="ECO:0007669"/>
    <property type="project" value="UniProtKB-UniRule"/>
</dbReference>
<dbReference type="GO" id="GO:0006166">
    <property type="term" value="P:purine ribonucleoside salvage"/>
    <property type="evidence" value="ECO:0007669"/>
    <property type="project" value="UniProtKB-KW"/>
</dbReference>
<dbReference type="CDD" id="cd06223">
    <property type="entry name" value="PRTases_typeI"/>
    <property type="match status" value="1"/>
</dbReference>
<dbReference type="FunFam" id="3.40.50.2020:FF:000004">
    <property type="entry name" value="Adenine phosphoribosyltransferase"/>
    <property type="match status" value="1"/>
</dbReference>
<dbReference type="Gene3D" id="3.40.50.2020">
    <property type="match status" value="1"/>
</dbReference>
<dbReference type="HAMAP" id="MF_00004">
    <property type="entry name" value="Aden_phosphoribosyltr"/>
    <property type="match status" value="1"/>
</dbReference>
<dbReference type="InterPro" id="IPR005764">
    <property type="entry name" value="Ade_phspho_trans"/>
</dbReference>
<dbReference type="InterPro" id="IPR000836">
    <property type="entry name" value="PRibTrfase_dom"/>
</dbReference>
<dbReference type="InterPro" id="IPR029057">
    <property type="entry name" value="PRTase-like"/>
</dbReference>
<dbReference type="InterPro" id="IPR050054">
    <property type="entry name" value="UPRTase/APRTase"/>
</dbReference>
<dbReference type="NCBIfam" id="TIGR01090">
    <property type="entry name" value="apt"/>
    <property type="match status" value="1"/>
</dbReference>
<dbReference type="NCBIfam" id="NF002632">
    <property type="entry name" value="PRK02304.1-1"/>
    <property type="match status" value="1"/>
</dbReference>
<dbReference type="NCBIfam" id="NF002633">
    <property type="entry name" value="PRK02304.1-2"/>
    <property type="match status" value="1"/>
</dbReference>
<dbReference type="NCBIfam" id="NF002634">
    <property type="entry name" value="PRK02304.1-3"/>
    <property type="match status" value="1"/>
</dbReference>
<dbReference type="NCBIfam" id="NF002636">
    <property type="entry name" value="PRK02304.1-5"/>
    <property type="match status" value="1"/>
</dbReference>
<dbReference type="PANTHER" id="PTHR32315">
    <property type="entry name" value="ADENINE PHOSPHORIBOSYLTRANSFERASE"/>
    <property type="match status" value="1"/>
</dbReference>
<dbReference type="PANTHER" id="PTHR32315:SF3">
    <property type="entry name" value="ADENINE PHOSPHORIBOSYLTRANSFERASE"/>
    <property type="match status" value="1"/>
</dbReference>
<dbReference type="Pfam" id="PF00156">
    <property type="entry name" value="Pribosyltran"/>
    <property type="match status" value="1"/>
</dbReference>
<dbReference type="SUPFAM" id="SSF53271">
    <property type="entry name" value="PRTase-like"/>
    <property type="match status" value="1"/>
</dbReference>
<dbReference type="PROSITE" id="PS00103">
    <property type="entry name" value="PUR_PYR_PR_TRANSFER"/>
    <property type="match status" value="1"/>
</dbReference>
<proteinExistence type="inferred from homology"/>
<accession>B7N922</accession>
<protein>
    <recommendedName>
        <fullName evidence="1">Adenine phosphoribosyltransferase</fullName>
        <shortName evidence="1">APRT</shortName>
        <ecNumber evidence="1">2.4.2.7</ecNumber>
    </recommendedName>
</protein>
<name>APT_ECOLU</name>
<gene>
    <name evidence="1" type="primary">apt</name>
    <name type="ordered locus">ECUMN_0508</name>
</gene>